<dbReference type="EC" id="4.2.3.5" evidence="1"/>
<dbReference type="EMBL" id="AJ938182">
    <property type="protein sequence ID" value="CAI81019.1"/>
    <property type="molecule type" value="Genomic_DNA"/>
</dbReference>
<dbReference type="RefSeq" id="WP_001269941.1">
    <property type="nucleotide sequence ID" value="NC_007622.1"/>
</dbReference>
<dbReference type="SMR" id="Q2YY88"/>
<dbReference type="KEGG" id="sab:SAB1330c"/>
<dbReference type="HOGENOM" id="CLU_034547_2_0_9"/>
<dbReference type="UniPathway" id="UPA00053">
    <property type="reaction ID" value="UER00090"/>
</dbReference>
<dbReference type="GO" id="GO:0005829">
    <property type="term" value="C:cytosol"/>
    <property type="evidence" value="ECO:0007669"/>
    <property type="project" value="TreeGrafter"/>
</dbReference>
<dbReference type="GO" id="GO:0004107">
    <property type="term" value="F:chorismate synthase activity"/>
    <property type="evidence" value="ECO:0007669"/>
    <property type="project" value="UniProtKB-UniRule"/>
</dbReference>
<dbReference type="GO" id="GO:0010181">
    <property type="term" value="F:FMN binding"/>
    <property type="evidence" value="ECO:0007669"/>
    <property type="project" value="TreeGrafter"/>
</dbReference>
<dbReference type="GO" id="GO:0008652">
    <property type="term" value="P:amino acid biosynthetic process"/>
    <property type="evidence" value="ECO:0007669"/>
    <property type="project" value="UniProtKB-KW"/>
</dbReference>
<dbReference type="GO" id="GO:0009073">
    <property type="term" value="P:aromatic amino acid family biosynthetic process"/>
    <property type="evidence" value="ECO:0007669"/>
    <property type="project" value="UniProtKB-KW"/>
</dbReference>
<dbReference type="GO" id="GO:0009423">
    <property type="term" value="P:chorismate biosynthetic process"/>
    <property type="evidence" value="ECO:0007669"/>
    <property type="project" value="UniProtKB-UniRule"/>
</dbReference>
<dbReference type="CDD" id="cd07304">
    <property type="entry name" value="Chorismate_synthase"/>
    <property type="match status" value="1"/>
</dbReference>
<dbReference type="FunFam" id="3.60.150.10:FF:000002">
    <property type="entry name" value="Chorismate synthase"/>
    <property type="match status" value="1"/>
</dbReference>
<dbReference type="Gene3D" id="3.60.150.10">
    <property type="entry name" value="Chorismate synthase AroC"/>
    <property type="match status" value="1"/>
</dbReference>
<dbReference type="HAMAP" id="MF_00300">
    <property type="entry name" value="Chorismate_synth"/>
    <property type="match status" value="1"/>
</dbReference>
<dbReference type="InterPro" id="IPR000453">
    <property type="entry name" value="Chorismate_synth"/>
</dbReference>
<dbReference type="InterPro" id="IPR035904">
    <property type="entry name" value="Chorismate_synth_AroC_sf"/>
</dbReference>
<dbReference type="InterPro" id="IPR020541">
    <property type="entry name" value="Chorismate_synthase_CS"/>
</dbReference>
<dbReference type="NCBIfam" id="TIGR00033">
    <property type="entry name" value="aroC"/>
    <property type="match status" value="1"/>
</dbReference>
<dbReference type="NCBIfam" id="NF003793">
    <property type="entry name" value="PRK05382.1"/>
    <property type="match status" value="1"/>
</dbReference>
<dbReference type="PANTHER" id="PTHR21085">
    <property type="entry name" value="CHORISMATE SYNTHASE"/>
    <property type="match status" value="1"/>
</dbReference>
<dbReference type="PANTHER" id="PTHR21085:SF0">
    <property type="entry name" value="CHORISMATE SYNTHASE"/>
    <property type="match status" value="1"/>
</dbReference>
<dbReference type="Pfam" id="PF01264">
    <property type="entry name" value="Chorismate_synt"/>
    <property type="match status" value="1"/>
</dbReference>
<dbReference type="PIRSF" id="PIRSF001456">
    <property type="entry name" value="Chorismate_synth"/>
    <property type="match status" value="1"/>
</dbReference>
<dbReference type="SUPFAM" id="SSF103263">
    <property type="entry name" value="Chorismate synthase, AroC"/>
    <property type="match status" value="1"/>
</dbReference>
<dbReference type="PROSITE" id="PS00787">
    <property type="entry name" value="CHORISMATE_SYNTHASE_1"/>
    <property type="match status" value="1"/>
</dbReference>
<dbReference type="PROSITE" id="PS00788">
    <property type="entry name" value="CHORISMATE_SYNTHASE_2"/>
    <property type="match status" value="1"/>
</dbReference>
<dbReference type="PROSITE" id="PS00789">
    <property type="entry name" value="CHORISMATE_SYNTHASE_3"/>
    <property type="match status" value="1"/>
</dbReference>
<evidence type="ECO:0000255" key="1">
    <source>
        <dbReference type="HAMAP-Rule" id="MF_00300"/>
    </source>
</evidence>
<keyword id="KW-0028">Amino-acid biosynthesis</keyword>
<keyword id="KW-0057">Aromatic amino acid biosynthesis</keyword>
<keyword id="KW-0274">FAD</keyword>
<keyword id="KW-0285">Flavoprotein</keyword>
<keyword id="KW-0288">FMN</keyword>
<keyword id="KW-0456">Lyase</keyword>
<keyword id="KW-0521">NADP</keyword>
<protein>
    <recommendedName>
        <fullName evidence="1">Chorismate synthase</fullName>
        <shortName evidence="1">CS</shortName>
        <ecNumber evidence="1">4.2.3.5</ecNumber>
    </recommendedName>
    <alternativeName>
        <fullName evidence="1">5-enolpyruvylshikimate-3-phosphate phospholyase</fullName>
    </alternativeName>
</protein>
<proteinExistence type="inferred from homology"/>
<feature type="chain" id="PRO_0000256341" description="Chorismate synthase">
    <location>
        <begin position="1"/>
        <end position="388"/>
    </location>
</feature>
<feature type="binding site" evidence="1">
    <location>
        <position position="39"/>
    </location>
    <ligand>
        <name>NADP(+)</name>
        <dbReference type="ChEBI" id="CHEBI:58349"/>
    </ligand>
</feature>
<feature type="binding site" evidence="1">
    <location>
        <position position="45"/>
    </location>
    <ligand>
        <name>NADP(+)</name>
        <dbReference type="ChEBI" id="CHEBI:58349"/>
    </ligand>
</feature>
<feature type="binding site" evidence="1">
    <location>
        <begin position="132"/>
        <end position="134"/>
    </location>
    <ligand>
        <name>FMN</name>
        <dbReference type="ChEBI" id="CHEBI:58210"/>
    </ligand>
</feature>
<feature type="binding site" evidence="1">
    <location>
        <begin position="251"/>
        <end position="252"/>
    </location>
    <ligand>
        <name>FMN</name>
        <dbReference type="ChEBI" id="CHEBI:58210"/>
    </ligand>
</feature>
<feature type="binding site" evidence="1">
    <location>
        <position position="296"/>
    </location>
    <ligand>
        <name>FMN</name>
        <dbReference type="ChEBI" id="CHEBI:58210"/>
    </ligand>
</feature>
<feature type="binding site" evidence="1">
    <location>
        <begin position="311"/>
        <end position="315"/>
    </location>
    <ligand>
        <name>FMN</name>
        <dbReference type="ChEBI" id="CHEBI:58210"/>
    </ligand>
</feature>
<feature type="binding site" evidence="1">
    <location>
        <position position="337"/>
    </location>
    <ligand>
        <name>FMN</name>
        <dbReference type="ChEBI" id="CHEBI:58210"/>
    </ligand>
</feature>
<sequence>MRYLTSGESHGPQLTVIVEGVPANLEVKVEDINREMFKRQGGYGRGRRMQIEKDTVEIVSGVRNGYTLGSPITMVVTNDDFTHWRKIMGAAPISDEERENMKRTITKPRPGHADLVGGMKYNHRDLRNVLERSSARETAARVAVGALCKVLLEQLDIEIYSRVVEIGGIKDKDFYDSETFKANLDRNDVRVIDDGIAQAMRDKIDEAKNDGDSIGGVVQVVVENMPVGVGSYVHYDRKLDGRIAQGVVSINAFKGVSFGEGFKAAEKPGSEIQDEILYNTELGYYRGSNHLGGLEGGMSNGMPIIVNGVMKPIPTLYKPLNSVDINTKEDFKATIERSDSCAVPAASIVCEHVVAFEIAKALLEEFQSNHIEQLKQQIIERRQLNIEF</sequence>
<name>AROC_STAAB</name>
<gene>
    <name evidence="1" type="primary">aroC</name>
    <name type="ordered locus">SAB1330c</name>
</gene>
<comment type="function">
    <text evidence="1">Catalyzes the anti-1,4-elimination of the C-3 phosphate and the C-6 proR hydrogen from 5-enolpyruvylshikimate-3-phosphate (EPSP) to yield chorismate, which is the branch point compound that serves as the starting substrate for the three terminal pathways of aromatic amino acid biosynthesis. This reaction introduces a second double bond into the aromatic ring system.</text>
</comment>
<comment type="catalytic activity">
    <reaction evidence="1">
        <text>5-O-(1-carboxyvinyl)-3-phosphoshikimate = chorismate + phosphate</text>
        <dbReference type="Rhea" id="RHEA:21020"/>
        <dbReference type="ChEBI" id="CHEBI:29748"/>
        <dbReference type="ChEBI" id="CHEBI:43474"/>
        <dbReference type="ChEBI" id="CHEBI:57701"/>
        <dbReference type="EC" id="4.2.3.5"/>
    </reaction>
</comment>
<comment type="cofactor">
    <cofactor evidence="1">
        <name>FMNH2</name>
        <dbReference type="ChEBI" id="CHEBI:57618"/>
    </cofactor>
    <text evidence="1">Reduced FMN (FMNH(2)).</text>
</comment>
<comment type="pathway">
    <text evidence="1">Metabolic intermediate biosynthesis; chorismate biosynthesis; chorismate from D-erythrose 4-phosphate and phosphoenolpyruvate: step 7/7.</text>
</comment>
<comment type="subunit">
    <text evidence="1">Homotetramer.</text>
</comment>
<comment type="similarity">
    <text evidence="1">Belongs to the chorismate synthase family.</text>
</comment>
<organism>
    <name type="scientific">Staphylococcus aureus (strain bovine RF122 / ET3-1)</name>
    <dbReference type="NCBI Taxonomy" id="273036"/>
    <lineage>
        <taxon>Bacteria</taxon>
        <taxon>Bacillati</taxon>
        <taxon>Bacillota</taxon>
        <taxon>Bacilli</taxon>
        <taxon>Bacillales</taxon>
        <taxon>Staphylococcaceae</taxon>
        <taxon>Staphylococcus</taxon>
    </lineage>
</organism>
<accession>Q2YY88</accession>
<reference key="1">
    <citation type="journal article" date="2007" name="PLoS ONE">
        <title>Molecular correlates of host specialization in Staphylococcus aureus.</title>
        <authorList>
            <person name="Herron-Olson L."/>
            <person name="Fitzgerald J.R."/>
            <person name="Musser J.M."/>
            <person name="Kapur V."/>
        </authorList>
    </citation>
    <scope>NUCLEOTIDE SEQUENCE [LARGE SCALE GENOMIC DNA]</scope>
    <source>
        <strain>bovine RF122 / ET3-1</strain>
    </source>
</reference>